<feature type="chain" id="PRO_0000347361" description="Urease accessory protein UreG 2">
    <location>
        <begin position="1"/>
        <end position="212"/>
    </location>
</feature>
<feature type="binding site" evidence="1">
    <location>
        <begin position="11"/>
        <end position="18"/>
    </location>
    <ligand>
        <name>GTP</name>
        <dbReference type="ChEBI" id="CHEBI:37565"/>
    </ligand>
</feature>
<dbReference type="EMBL" id="CP000708">
    <property type="protein sequence ID" value="ABQ60430.1"/>
    <property type="molecule type" value="Genomic_DNA"/>
</dbReference>
<dbReference type="SMR" id="A5VRB1"/>
<dbReference type="KEGG" id="bov:BOV_1317"/>
<dbReference type="HOGENOM" id="CLU_072144_1_0_5"/>
<dbReference type="PhylomeDB" id="A5VRB1"/>
<dbReference type="Proteomes" id="UP000006383">
    <property type="component" value="Chromosome I"/>
</dbReference>
<dbReference type="GO" id="GO:0005737">
    <property type="term" value="C:cytoplasm"/>
    <property type="evidence" value="ECO:0007669"/>
    <property type="project" value="UniProtKB-SubCell"/>
</dbReference>
<dbReference type="GO" id="GO:0005525">
    <property type="term" value="F:GTP binding"/>
    <property type="evidence" value="ECO:0007669"/>
    <property type="project" value="UniProtKB-KW"/>
</dbReference>
<dbReference type="GO" id="GO:0003924">
    <property type="term" value="F:GTPase activity"/>
    <property type="evidence" value="ECO:0007669"/>
    <property type="project" value="InterPro"/>
</dbReference>
<dbReference type="GO" id="GO:0016151">
    <property type="term" value="F:nickel cation binding"/>
    <property type="evidence" value="ECO:0007669"/>
    <property type="project" value="UniProtKB-UniRule"/>
</dbReference>
<dbReference type="GO" id="GO:0043419">
    <property type="term" value="P:urea catabolic process"/>
    <property type="evidence" value="ECO:0007669"/>
    <property type="project" value="InterPro"/>
</dbReference>
<dbReference type="CDD" id="cd05540">
    <property type="entry name" value="UreG"/>
    <property type="match status" value="1"/>
</dbReference>
<dbReference type="Gene3D" id="3.40.50.300">
    <property type="entry name" value="P-loop containing nucleotide triphosphate hydrolases"/>
    <property type="match status" value="1"/>
</dbReference>
<dbReference type="HAMAP" id="MF_01389">
    <property type="entry name" value="UreG"/>
    <property type="match status" value="1"/>
</dbReference>
<dbReference type="InterPro" id="IPR003495">
    <property type="entry name" value="CobW/HypB/UreG_nucleotide-bd"/>
</dbReference>
<dbReference type="InterPro" id="IPR027417">
    <property type="entry name" value="P-loop_NTPase"/>
</dbReference>
<dbReference type="InterPro" id="IPR004400">
    <property type="entry name" value="UreG"/>
</dbReference>
<dbReference type="NCBIfam" id="TIGR00101">
    <property type="entry name" value="ureG"/>
    <property type="match status" value="1"/>
</dbReference>
<dbReference type="PANTHER" id="PTHR31715">
    <property type="entry name" value="UREASE ACCESSORY PROTEIN G"/>
    <property type="match status" value="1"/>
</dbReference>
<dbReference type="PANTHER" id="PTHR31715:SF0">
    <property type="entry name" value="UREASE ACCESSORY PROTEIN G"/>
    <property type="match status" value="1"/>
</dbReference>
<dbReference type="Pfam" id="PF02492">
    <property type="entry name" value="cobW"/>
    <property type="match status" value="1"/>
</dbReference>
<dbReference type="PIRSF" id="PIRSF005624">
    <property type="entry name" value="Ni-bind_GTPase"/>
    <property type="match status" value="1"/>
</dbReference>
<dbReference type="SUPFAM" id="SSF52540">
    <property type="entry name" value="P-loop containing nucleoside triphosphate hydrolases"/>
    <property type="match status" value="1"/>
</dbReference>
<keyword id="KW-0143">Chaperone</keyword>
<keyword id="KW-0963">Cytoplasm</keyword>
<keyword id="KW-0342">GTP-binding</keyword>
<keyword id="KW-0996">Nickel insertion</keyword>
<keyword id="KW-0547">Nucleotide-binding</keyword>
<gene>
    <name evidence="1" type="primary">ureG2</name>
    <name type="ordered locus">BOV_1317</name>
</gene>
<proteinExistence type="inferred from homology"/>
<reference key="1">
    <citation type="journal article" date="2009" name="PLoS ONE">
        <title>Genome degradation in Brucella ovis corresponds with narrowing of its host range and tissue tropism.</title>
        <authorList>
            <person name="Tsolis R.M."/>
            <person name="Seshadri R."/>
            <person name="Santos R.L."/>
            <person name="Sangari F.J."/>
            <person name="Lobo J.M."/>
            <person name="de Jong M.F."/>
            <person name="Ren Q."/>
            <person name="Myers G."/>
            <person name="Brinkac L.M."/>
            <person name="Nelson W.C."/>
            <person name="Deboy R.T."/>
            <person name="Angiuoli S."/>
            <person name="Khouri H."/>
            <person name="Dimitrov G."/>
            <person name="Robinson J.R."/>
            <person name="Mulligan S."/>
            <person name="Walker R.L."/>
            <person name="Elzer P.E."/>
            <person name="Hassan K.A."/>
            <person name="Paulsen I.T."/>
        </authorList>
    </citation>
    <scope>NUCLEOTIDE SEQUENCE [LARGE SCALE GENOMIC DNA]</scope>
    <source>
        <strain>ATCC 25840 / 63/290 / NCTC 10512</strain>
    </source>
</reference>
<comment type="function">
    <text evidence="1">Facilitates the functional incorporation of the urease nickel metallocenter. This process requires GTP hydrolysis, probably effectuated by UreG.</text>
</comment>
<comment type="subunit">
    <text evidence="1">Homodimer. UreD, UreF and UreG form a complex that acts as a GTP-hydrolysis-dependent molecular chaperone, activating the urease apoprotein by helping to assemble the nickel containing metallocenter of UreC. The UreE protein probably delivers the nickel.</text>
</comment>
<comment type="subcellular location">
    <subcellularLocation>
        <location evidence="1">Cytoplasm</location>
    </subcellularLocation>
</comment>
<comment type="similarity">
    <text evidence="1">Belongs to the SIMIBI class G3E GTPase family. UreG subfamily.</text>
</comment>
<accession>A5VRB1</accession>
<protein>
    <recommendedName>
        <fullName evidence="1">Urease accessory protein UreG 2</fullName>
    </recommendedName>
</protein>
<evidence type="ECO:0000255" key="1">
    <source>
        <dbReference type="HAMAP-Rule" id="MF_01389"/>
    </source>
</evidence>
<sequence length="212" mass="22977">MKKIPRIGVGGPVGSGKTAIIEAVVPILIKLGYRILVITNDIVTTEDAKHVQRTLKGVLIEDRIVGVETGGCPHTAVREDPSMNLAAVEEMEAKFPDTDLVLLESGGDNLTLTFSPALIDFFIYVIDVAAGDKIPRKNGPGISQSDILVINKTDLAPYVGASLQVMDDDSRMMRGKKPFVFTNCKTNEGIDDLVHLIRENVLFDTEVSKESA</sequence>
<organism>
    <name type="scientific">Brucella ovis (strain ATCC 25840 / 63/290 / NCTC 10512)</name>
    <dbReference type="NCBI Taxonomy" id="444178"/>
    <lineage>
        <taxon>Bacteria</taxon>
        <taxon>Pseudomonadati</taxon>
        <taxon>Pseudomonadota</taxon>
        <taxon>Alphaproteobacteria</taxon>
        <taxon>Hyphomicrobiales</taxon>
        <taxon>Brucellaceae</taxon>
        <taxon>Brucella/Ochrobactrum group</taxon>
        <taxon>Brucella</taxon>
    </lineage>
</organism>
<name>UREG2_BRUO2</name>